<sequence length="271" mass="29037">MTVHPVRPEFVPDPSLSQTEMEELQRDIAAAARFEDEMDVLPEAITRTGDAPDVDQTTLSTSADDRTEPPFIAGVDQAFVDDKAVSAIVVLQNGEVIERVSAVERTEIPYIPGLLSFREGGAILAAFAELETDPDVVLVDGSGRIHFREAGLATHIGVTLDVPAVGVAKNLLCGTPEQSLDERYPEGTRIPITADDSVETCPDGTVIGHALQTRQYDSPNRHINPLIVSPGHRVSASTAADIVEATADGYKLPEPTRLADSYADEAKATVE</sequence>
<comment type="function">
    <text evidence="1">DNA repair enzyme involved in the repair of deaminated bases. Selectively cleaves double-stranded DNA at the second phosphodiester bond 3' to a deoxyinosine leaving behind the intact lesion on the nicked DNA.</text>
</comment>
<comment type="catalytic activity">
    <reaction evidence="1">
        <text>Endonucleolytic cleavage at apurinic or apyrimidinic sites to products with a 5'-phosphate.</text>
        <dbReference type="EC" id="3.1.21.7"/>
    </reaction>
</comment>
<comment type="cofactor">
    <cofactor evidence="1">
        <name>Mg(2+)</name>
        <dbReference type="ChEBI" id="CHEBI:18420"/>
    </cofactor>
</comment>
<comment type="subcellular location">
    <subcellularLocation>
        <location evidence="1">Cytoplasm</location>
    </subcellularLocation>
</comment>
<comment type="similarity">
    <text evidence="1">Belongs to the endonuclease V family.</text>
</comment>
<accession>Q5V474</accession>
<feature type="chain" id="PRO_0000159685" description="Endonuclease V">
    <location>
        <begin position="1"/>
        <end position="271"/>
    </location>
</feature>
<feature type="region of interest" description="Disordered" evidence="2">
    <location>
        <begin position="46"/>
        <end position="67"/>
    </location>
</feature>
<feature type="binding site" evidence="1">
    <location>
        <position position="76"/>
    </location>
    <ligand>
        <name>Mg(2+)</name>
        <dbReference type="ChEBI" id="CHEBI:18420"/>
    </ligand>
</feature>
<feature type="binding site" evidence="1">
    <location>
        <position position="140"/>
    </location>
    <ligand>
        <name>Mg(2+)</name>
        <dbReference type="ChEBI" id="CHEBI:18420"/>
    </ligand>
</feature>
<feature type="site" description="Interaction with target DNA" evidence="1">
    <location>
        <position position="110"/>
    </location>
</feature>
<evidence type="ECO:0000255" key="1">
    <source>
        <dbReference type="HAMAP-Rule" id="MF_00801"/>
    </source>
</evidence>
<evidence type="ECO:0000256" key="2">
    <source>
        <dbReference type="SAM" id="MobiDB-lite"/>
    </source>
</evidence>
<gene>
    <name evidence="1" type="primary">nfi</name>
    <name type="ordered locus">rrnAC0676</name>
</gene>
<proteinExistence type="inferred from homology"/>
<protein>
    <recommendedName>
        <fullName evidence="1">Endonuclease V</fullName>
        <ecNumber evidence="1">3.1.21.7</ecNumber>
    </recommendedName>
    <alternativeName>
        <fullName evidence="1">Deoxyinosine 3'endonuclease</fullName>
    </alternativeName>
    <alternativeName>
        <fullName evidence="1">Deoxyribonuclease V</fullName>
        <shortName evidence="1">DNase V</shortName>
    </alternativeName>
</protein>
<dbReference type="EC" id="3.1.21.7" evidence="1"/>
<dbReference type="EMBL" id="AY596297">
    <property type="protein sequence ID" value="AAV45678.1"/>
    <property type="molecule type" value="Genomic_DNA"/>
</dbReference>
<dbReference type="RefSeq" id="WP_007190476.1">
    <property type="nucleotide sequence ID" value="NZ_CP039138.1"/>
</dbReference>
<dbReference type="SMR" id="Q5V474"/>
<dbReference type="STRING" id="272569.rrnAC0676"/>
<dbReference type="PaxDb" id="272569-rrnAC0676"/>
<dbReference type="EnsemblBacteria" id="AAV45678">
    <property type="protein sequence ID" value="AAV45678"/>
    <property type="gene ID" value="rrnAC0676"/>
</dbReference>
<dbReference type="KEGG" id="hma:rrnAC0676"/>
<dbReference type="PATRIC" id="fig|272569.17.peg.1427"/>
<dbReference type="eggNOG" id="arCOG00929">
    <property type="taxonomic scope" value="Archaea"/>
</dbReference>
<dbReference type="HOGENOM" id="CLU_047631_2_0_2"/>
<dbReference type="Proteomes" id="UP000001169">
    <property type="component" value="Chromosome I"/>
</dbReference>
<dbReference type="GO" id="GO:0005737">
    <property type="term" value="C:cytoplasm"/>
    <property type="evidence" value="ECO:0007669"/>
    <property type="project" value="UniProtKB-SubCell"/>
</dbReference>
<dbReference type="GO" id="GO:0043737">
    <property type="term" value="F:deoxyribonuclease V activity"/>
    <property type="evidence" value="ECO:0007669"/>
    <property type="project" value="UniProtKB-UniRule"/>
</dbReference>
<dbReference type="GO" id="GO:0000287">
    <property type="term" value="F:magnesium ion binding"/>
    <property type="evidence" value="ECO:0007669"/>
    <property type="project" value="UniProtKB-UniRule"/>
</dbReference>
<dbReference type="GO" id="GO:0016891">
    <property type="term" value="F:RNA endonuclease activity, producing 5'-phosphomonoesters"/>
    <property type="evidence" value="ECO:0007669"/>
    <property type="project" value="TreeGrafter"/>
</dbReference>
<dbReference type="GO" id="GO:0003727">
    <property type="term" value="F:single-stranded RNA binding"/>
    <property type="evidence" value="ECO:0007669"/>
    <property type="project" value="TreeGrafter"/>
</dbReference>
<dbReference type="GO" id="GO:0006281">
    <property type="term" value="P:DNA repair"/>
    <property type="evidence" value="ECO:0007669"/>
    <property type="project" value="UniProtKB-UniRule"/>
</dbReference>
<dbReference type="CDD" id="cd06559">
    <property type="entry name" value="Endonuclease_V"/>
    <property type="match status" value="1"/>
</dbReference>
<dbReference type="Gene3D" id="3.30.2170.10">
    <property type="entry name" value="archaeoglobus fulgidus dsm 4304 superfamily"/>
    <property type="match status" value="1"/>
</dbReference>
<dbReference type="HAMAP" id="MF_00801">
    <property type="entry name" value="Endonuclease_5"/>
    <property type="match status" value="1"/>
</dbReference>
<dbReference type="InterPro" id="IPR007581">
    <property type="entry name" value="Endonuclease-V"/>
</dbReference>
<dbReference type="PANTHER" id="PTHR28511">
    <property type="entry name" value="ENDONUCLEASE V"/>
    <property type="match status" value="1"/>
</dbReference>
<dbReference type="PANTHER" id="PTHR28511:SF1">
    <property type="entry name" value="ENDONUCLEASE V"/>
    <property type="match status" value="1"/>
</dbReference>
<dbReference type="Pfam" id="PF04493">
    <property type="entry name" value="Endonuclease_5"/>
    <property type="match status" value="1"/>
</dbReference>
<reference key="1">
    <citation type="journal article" date="2004" name="Genome Res.">
        <title>Genome sequence of Haloarcula marismortui: a halophilic archaeon from the Dead Sea.</title>
        <authorList>
            <person name="Baliga N.S."/>
            <person name="Bonneau R."/>
            <person name="Facciotti M.T."/>
            <person name="Pan M."/>
            <person name="Glusman G."/>
            <person name="Deutsch E.W."/>
            <person name="Shannon P."/>
            <person name="Chiu Y."/>
            <person name="Weng R.S."/>
            <person name="Gan R.R."/>
            <person name="Hung P."/>
            <person name="Date S.V."/>
            <person name="Marcotte E."/>
            <person name="Hood L."/>
            <person name="Ng W.V."/>
        </authorList>
    </citation>
    <scope>NUCLEOTIDE SEQUENCE [LARGE SCALE GENOMIC DNA]</scope>
    <source>
        <strain>ATCC 43049 / DSM 3752 / JCM 8966 / VKM B-1809</strain>
    </source>
</reference>
<organism>
    <name type="scientific">Haloarcula marismortui (strain ATCC 43049 / DSM 3752 / JCM 8966 / VKM B-1809)</name>
    <name type="common">Halobacterium marismortui</name>
    <dbReference type="NCBI Taxonomy" id="272569"/>
    <lineage>
        <taxon>Archaea</taxon>
        <taxon>Methanobacteriati</taxon>
        <taxon>Methanobacteriota</taxon>
        <taxon>Stenosarchaea group</taxon>
        <taxon>Halobacteria</taxon>
        <taxon>Halobacteriales</taxon>
        <taxon>Haloarculaceae</taxon>
        <taxon>Haloarcula</taxon>
    </lineage>
</organism>
<name>NFI_HALMA</name>
<keyword id="KW-0963">Cytoplasm</keyword>
<keyword id="KW-0227">DNA damage</keyword>
<keyword id="KW-0234">DNA repair</keyword>
<keyword id="KW-0255">Endonuclease</keyword>
<keyword id="KW-0378">Hydrolase</keyword>
<keyword id="KW-0460">Magnesium</keyword>
<keyword id="KW-0479">Metal-binding</keyword>
<keyword id="KW-0540">Nuclease</keyword>
<keyword id="KW-1185">Reference proteome</keyword>